<reference key="1">
    <citation type="journal article" date="1991" name="Virology">
        <title>Limited sequence variation in human T-lymphotropic virus type 1 isolates from North American and African patients.</title>
        <authorList>
            <person name="Paine E."/>
            <person name="Garcia J."/>
            <person name="Philpott T.C."/>
            <person name="Shaw G."/>
            <person name="Ratner L."/>
        </authorList>
    </citation>
    <scope>NUCLEOTIDE SEQUENCE [GENOMIC RNA]</scope>
</reference>
<reference key="2">
    <citation type="journal article" date="2005" name="Oncogene">
        <title>Molecular mechanisms of cellular transformation by HTLV-1 Tax.</title>
        <authorList>
            <person name="Grassmann R."/>
            <person name="Aboud M."/>
            <person name="Jeang K.T."/>
        </authorList>
    </citation>
    <scope>REVIEW</scope>
</reference>
<reference key="3">
    <citation type="journal article" date="2005" name="Oncogene">
        <title>Transcriptional and post-transcriptional gene regulation of HTLV-1.</title>
        <authorList>
            <person name="Kashanchi F."/>
            <person name="Brady J.N."/>
        </authorList>
    </citation>
    <scope>REVIEW</scope>
</reference>
<evidence type="ECO:0000250" key="1"/>
<evidence type="ECO:0000250" key="2">
    <source>
        <dbReference type="UniProtKB" id="P03409"/>
    </source>
</evidence>
<evidence type="ECO:0000255" key="3"/>
<evidence type="ECO:0000256" key="4">
    <source>
        <dbReference type="SAM" id="MobiDB-lite"/>
    </source>
</evidence>
<evidence type="ECO:0000305" key="5"/>
<accession>P0C213</accession>
<keyword id="KW-0002">3D-structure</keyword>
<keyword id="KW-1074">Activation of host NF-kappa-B by virus</keyword>
<keyword id="KW-0010">Activator</keyword>
<keyword id="KW-0238">DNA-binding</keyword>
<keyword id="KW-1077">G0/G1 host cell cycle checkpoint dysregulation by virus</keyword>
<keyword id="KW-1078">G1/S host cell cycle checkpoint dysregulation by virus</keyword>
<keyword id="KW-1035">Host cytoplasm</keyword>
<keyword id="KW-1048">Host nucleus</keyword>
<keyword id="KW-0945">Host-virus interaction</keyword>
<keyword id="KW-1098">Inhibition of host mitotic exit by virus</keyword>
<keyword id="KW-0479">Metal-binding</keyword>
<keyword id="KW-1121">Modulation of host cell cycle by virus</keyword>
<keyword id="KW-0553">Oncogene</keyword>
<keyword id="KW-0597">Phosphoprotein</keyword>
<keyword id="KW-0729">SH3-binding</keyword>
<keyword id="KW-0804">Transcription</keyword>
<keyword id="KW-0805">Transcription regulation</keyword>
<keyword id="KW-0862">Zinc</keyword>
<keyword id="KW-0863">Zinc-finger</keyword>
<proteinExistence type="evidence at protein level"/>
<sequence>MAHFPGFGQSLLFGYPVYVFGDCVQGDWCPISGGLCSARLHRHALLATCPEHQITWDPIDGRVIGSALQFLIPRLPSFPTQRTSKTLKVLTPPTTHTTPNIPPSFLQAMRKYSPFRNGYMEPTLGQHLPTLSFPDPGLRPQNLYTLWGGSVVCMYLYQLSPPITWPLLPHVIFDHPDQLGAFLTNVPYKRMEELLYKISLTTGALIILPEDCLPTTLFQPARAPVTLTAWQSGLLPFHSTLTTPGLIWAFTDGTPMISGPCPKDGRPSLVLQSSSFIFHKFQTKAYHPSFLLSHGLIQYSSFHNLHLLFEEYTNIPISLLFNEKEADDTDHEPQVSPGGLEPPSEKHFRETEV</sequence>
<name>TAX_HTL1F</name>
<gene>
    <name type="primary">tax</name>
</gene>
<organism>
    <name type="scientific">Human T-cell leukemia virus 1 (isolate Zaire EL subtype B)</name>
    <name type="common">HTLV-1</name>
    <dbReference type="NCBI Taxonomy" id="39015"/>
    <lineage>
        <taxon>Viruses</taxon>
        <taxon>Riboviria</taxon>
        <taxon>Pararnavirae</taxon>
        <taxon>Artverviricota</taxon>
        <taxon>Revtraviricetes</taxon>
        <taxon>Ortervirales</taxon>
        <taxon>Retroviridae</taxon>
        <taxon>Orthoretrovirinae</taxon>
        <taxon>Deltaretrovirus</taxon>
        <taxon>Primate T-lymphotropic virus 1</taxon>
    </lineage>
</organism>
<feature type="chain" id="PRO_0000260488" description="Protein Tax-1">
    <location>
        <begin position="1"/>
        <end position="353"/>
    </location>
</feature>
<feature type="zinc finger region" evidence="3">
    <location>
        <begin position="23"/>
        <end position="49"/>
    </location>
</feature>
<feature type="region of interest" description="Interaction with CREB1" evidence="1">
    <location>
        <begin position="2"/>
        <end position="58"/>
    </location>
</feature>
<feature type="region of interest" description="Interaction with CREBBP/P300" evidence="1">
    <location>
        <begin position="81"/>
        <end position="95"/>
    </location>
</feature>
<feature type="region of interest" description="Interaction with IKBKG" evidence="1">
    <location>
        <begin position="106"/>
        <end position="111"/>
    </location>
</feature>
<feature type="region of interest" description="Homodimerization" evidence="1">
    <location>
        <begin position="116"/>
        <end position="145"/>
    </location>
</feature>
<feature type="region of interest" description="Homodimerization" evidence="1">
    <location>
        <begin position="213"/>
        <end position="248"/>
    </location>
</feature>
<feature type="region of interest" description="Transactivation" evidence="1">
    <location>
        <begin position="289"/>
        <end position="322"/>
    </location>
</feature>
<feature type="region of interest" description="Interaction with CREBBP C-terminus" evidence="1">
    <location>
        <begin position="312"/>
        <end position="319"/>
    </location>
</feature>
<feature type="region of interest" description="Disordered" evidence="4">
    <location>
        <begin position="326"/>
        <end position="353"/>
    </location>
</feature>
<feature type="short sequence motif" description="SH3-binding" evidence="3">
    <location>
        <begin position="73"/>
        <end position="80"/>
    </location>
</feature>
<feature type="short sequence motif" description="Nuclear export signal" evidence="1">
    <location>
        <begin position="188"/>
        <end position="202"/>
    </location>
</feature>
<feature type="short sequence motif" description="PDZ-binding" evidence="1">
    <location>
        <begin position="350"/>
        <end position="353"/>
    </location>
</feature>
<feature type="compositionally biased region" description="Basic and acidic residues" evidence="4">
    <location>
        <begin position="343"/>
        <end position="353"/>
    </location>
</feature>
<feature type="modified residue" description="Phosphothreonine; by host" evidence="1">
    <location>
        <position position="48"/>
    </location>
</feature>
<feature type="modified residue" description="Phosphothreonine; by host" evidence="1">
    <location>
        <position position="184"/>
    </location>
</feature>
<feature type="modified residue" description="Phosphothreonine; by host" evidence="1">
    <location>
        <position position="215"/>
    </location>
</feature>
<feature type="modified residue" description="Phosphoserine; by host" evidence="1">
    <location>
        <position position="300"/>
    </location>
</feature>
<feature type="modified residue" description="Phosphoserine; by host" evidence="1">
    <location>
        <position position="301"/>
    </location>
</feature>
<feature type="modified residue" description="Phosphoserine; by host" evidence="1">
    <location>
        <position position="336"/>
    </location>
</feature>
<protein>
    <recommendedName>
        <fullName>Protein Tax-1</fullName>
    </recommendedName>
    <alternativeName>
        <fullName>Protein X-LOR</fullName>
    </alternativeName>
    <alternativeName>
        <fullName>Trans-activating transcriptional regulatory protein of HTLV-1</fullName>
    </alternativeName>
</protein>
<comment type="function">
    <text evidence="2">Transcriptional activator that governs the viral transcription from the 5'LTR via the recruitment of dimers of host phosphorylated CREB1. Together they bind cAMP response elements within the viral promoter and mediate high-level viral transcription. Increases host CREB1 O-GlcNAcylation to further increase 5'LTR transactivation. Also modulates the expression of cellular genes leading to the deregulation of T-cell proliferation, perturbing the integrity of cell cycle checkpoints, the DNA damage response and apopototic pathways. Acts as an ubiquitin E3 ligase and stimulates host IKK complex by catalyzing the assembly of free mixed-linkage polyubiquitin chains, resulting in constitutive activation of the transcription factor NF-kappa-B. Inhibits the host nonsense-mediated mRNA decay (NMD), a cellular process that can actively degrade mRNAs by interacting with host UPF1.</text>
</comment>
<comment type="subunit">
    <text evidence="2">Homodimer. Interacts with host CREB1. Interacts with host DLG1, IKBKG, KDM4A, MAGII3 and TAX1BP1. Recruits the coactivators CREBBP, EP300 and PCAF. Interaction with human CARM1 enhances Tax transactivation and promotes methylation of histone H3. Interacts with host SUV39H1 protein, leading to abrogate Tax transactivation of HTLV-1 LTR. Interaction with human CREB coactivators, CRTC1/TORC1, CRTC2/TORC2 and CRTC3/TORC3 enhances Tax transactivation. Interacts with host UPF1; this interaction inhibits the host nonsense-mediated mRNA decay (NMD). Interacts (via N-terminus) with host PLSCR1; this interaction negatively regulates Tax transactivation activity by altering its subcellular distribution and homodimerization.</text>
</comment>
<comment type="interaction">
    <interactant intactId="EBI-11793850">
        <id>P0C213</id>
    </interactant>
    <interactant intactId="EBI-357345">
        <id>Q14160</id>
        <label>SCRIB</label>
    </interactant>
    <organismsDiffer>true</organismsDiffer>
    <experiments>2</experiments>
</comment>
<comment type="subcellular location">
    <subcellularLocation>
        <location evidence="2">Host nucleus</location>
    </subcellularLocation>
    <subcellularLocation>
        <location evidence="2">Host cytoplasm</location>
    </subcellularLocation>
    <text evidence="2">Shuttles from the host nucleus to the cytoplasm. Found predominantly in the nucleus, where it is equally distributed between the nucleoplasm and the nuclear matrix.</text>
</comment>
<comment type="induction">
    <text>Down-regulated by P30II.</text>
</comment>
<comment type="domain">
    <text evidence="1">The 48 N-terminal residues contain a non-canonical functional nuclear localization signal (NLS).</text>
</comment>
<comment type="domain">
    <text evidence="1">The PDZ-binding domain mediates binding to human DLG1 and MAGI3. Interaction with other PDZ domain-containing protein induces IL2-independent growth (By similarity).</text>
</comment>
<comment type="PTM">
    <text evidence="1">Phosphorylation at Thr-48 results in the loss of NF-kappa-B activation function. Phosphorylation at Thr-215 results in loss of CREB and NF-B responsive promoters activation. Phosphorylation at Thr-184 and Ser-336 have no effect on these Tax functions. Phosphorylation of either Ser-300 or Ser-301 is necessary for localization to nuclear bodies. Thr-48, Thr-184, Thr-215 and Ser-336 are highly phosphorylated, whereas Ser-300 or Ser-301 are only rarely phosphorylated (By similarity).</text>
</comment>
<comment type="miscellaneous">
    <text>HTLV-1 lineages are divided in four clades, A (Cosmopolitan), B (Central African group), C (Melanesian group) and D (New Central African group).</text>
</comment>
<comment type="similarity">
    <text evidence="5">Belongs to the deltaretrovirus Tax protein family.</text>
</comment>
<organismHost>
    <name type="scientific">Homo sapiens</name>
    <name type="common">Human</name>
    <dbReference type="NCBI Taxonomy" id="9606"/>
</organismHost>
<dbReference type="EMBL" id="M67514">
    <property type="status" value="NOT_ANNOTATED_CDS"/>
    <property type="molecule type" value="Genomic_RNA"/>
</dbReference>
<dbReference type="PDB" id="1BD2">
    <property type="method" value="X-ray"/>
    <property type="resolution" value="2.50 A"/>
    <property type="chains" value="C=11-19"/>
</dbReference>
<dbReference type="PDB" id="4E5X">
    <property type="method" value="X-ray"/>
    <property type="resolution" value="1.95 A"/>
    <property type="chains" value="C/F=11-19"/>
</dbReference>
<dbReference type="PDB" id="4FTV">
    <property type="method" value="X-ray"/>
    <property type="resolution" value="2.74 A"/>
    <property type="chains" value="C=11-19"/>
</dbReference>
<dbReference type="PDBsum" id="1BD2"/>
<dbReference type="PDBsum" id="4E5X"/>
<dbReference type="PDBsum" id="4FTV"/>
<dbReference type="SMR" id="P0C213"/>
<dbReference type="IntAct" id="P0C213">
    <property type="interactions" value="3"/>
</dbReference>
<dbReference type="MINT" id="P0C213"/>
<dbReference type="EvolutionaryTrace" id="P0C213"/>
<dbReference type="GO" id="GO:0030430">
    <property type="term" value="C:host cell cytoplasm"/>
    <property type="evidence" value="ECO:0007669"/>
    <property type="project" value="UniProtKB-SubCell"/>
</dbReference>
<dbReference type="GO" id="GO:0042025">
    <property type="term" value="C:host cell nucleus"/>
    <property type="evidence" value="ECO:0007669"/>
    <property type="project" value="UniProtKB-SubCell"/>
</dbReference>
<dbReference type="GO" id="GO:0003677">
    <property type="term" value="F:DNA binding"/>
    <property type="evidence" value="ECO:0007669"/>
    <property type="project" value="UniProtKB-KW"/>
</dbReference>
<dbReference type="GO" id="GO:0017124">
    <property type="term" value="F:SH3 domain binding"/>
    <property type="evidence" value="ECO:0007669"/>
    <property type="project" value="UniProtKB-KW"/>
</dbReference>
<dbReference type="GO" id="GO:0008270">
    <property type="term" value="F:zinc ion binding"/>
    <property type="evidence" value="ECO:0007669"/>
    <property type="project" value="UniProtKB-KW"/>
</dbReference>
<dbReference type="GO" id="GO:0045893">
    <property type="term" value="P:positive regulation of DNA-templated transcription"/>
    <property type="evidence" value="ECO:0007669"/>
    <property type="project" value="InterPro"/>
</dbReference>
<dbReference type="GO" id="GO:0085033">
    <property type="term" value="P:symbiont-mediated activation of host NF-kappaB cascade"/>
    <property type="evidence" value="ECO:0007669"/>
    <property type="project" value="UniProtKB-KW"/>
</dbReference>
<dbReference type="GO" id="GO:0039646">
    <property type="term" value="P:symbiont-mediated perturbation of host cell cycle G0/G1 transition checkpoint"/>
    <property type="evidence" value="ECO:0007669"/>
    <property type="project" value="UniProtKB-KW"/>
</dbReference>
<dbReference type="GO" id="GO:0039645">
    <property type="term" value="P:symbiont-mediated perturbation of host cell cycle G1/S transition checkpoint"/>
    <property type="evidence" value="ECO:0007669"/>
    <property type="project" value="UniProtKB-KW"/>
</dbReference>
<dbReference type="GO" id="GO:0039593">
    <property type="term" value="P:symbiont-mediated perturbation of host exit from mitosis"/>
    <property type="evidence" value="ECO:0007669"/>
    <property type="project" value="UniProtKB-KW"/>
</dbReference>
<dbReference type="InterPro" id="IPR004120">
    <property type="entry name" value="Tax"/>
</dbReference>
<dbReference type="Pfam" id="PF02959">
    <property type="entry name" value="Tax"/>
    <property type="match status" value="1"/>
</dbReference>